<keyword id="KW-0997">Cell inner membrane</keyword>
<keyword id="KW-1003">Cell membrane</keyword>
<keyword id="KW-0444">Lipid biosynthesis</keyword>
<keyword id="KW-0443">Lipid metabolism</keyword>
<keyword id="KW-0472">Membrane</keyword>
<keyword id="KW-0594">Phospholipid biosynthesis</keyword>
<keyword id="KW-1208">Phospholipid metabolism</keyword>
<keyword id="KW-0808">Transferase</keyword>
<keyword id="KW-0812">Transmembrane</keyword>
<keyword id="KW-1133">Transmembrane helix</keyword>
<accession>B3Q9X6</accession>
<dbReference type="EC" id="2.3.1.275" evidence="1"/>
<dbReference type="EMBL" id="CP001096">
    <property type="protein sequence ID" value="ACF02029.1"/>
    <property type="molecule type" value="Genomic_DNA"/>
</dbReference>
<dbReference type="RefSeq" id="WP_011158664.1">
    <property type="nucleotide sequence ID" value="NC_011004.1"/>
</dbReference>
<dbReference type="SMR" id="B3Q9X6"/>
<dbReference type="GeneID" id="66894201"/>
<dbReference type="KEGG" id="rpt:Rpal_3529"/>
<dbReference type="HOGENOM" id="CLU_081254_1_0_5"/>
<dbReference type="OrthoDB" id="9777124at2"/>
<dbReference type="UniPathway" id="UPA00085"/>
<dbReference type="Proteomes" id="UP000001725">
    <property type="component" value="Chromosome"/>
</dbReference>
<dbReference type="GO" id="GO:0005886">
    <property type="term" value="C:plasma membrane"/>
    <property type="evidence" value="ECO:0007669"/>
    <property type="project" value="UniProtKB-SubCell"/>
</dbReference>
<dbReference type="GO" id="GO:0043772">
    <property type="term" value="F:acyl-phosphate glycerol-3-phosphate acyltransferase activity"/>
    <property type="evidence" value="ECO:0007669"/>
    <property type="project" value="UniProtKB-UniRule"/>
</dbReference>
<dbReference type="GO" id="GO:0008654">
    <property type="term" value="P:phospholipid biosynthetic process"/>
    <property type="evidence" value="ECO:0007669"/>
    <property type="project" value="UniProtKB-UniRule"/>
</dbReference>
<dbReference type="HAMAP" id="MF_01043">
    <property type="entry name" value="PlsY"/>
    <property type="match status" value="1"/>
</dbReference>
<dbReference type="InterPro" id="IPR003811">
    <property type="entry name" value="G3P_acylTferase_PlsY"/>
</dbReference>
<dbReference type="NCBIfam" id="TIGR00023">
    <property type="entry name" value="glycerol-3-phosphate 1-O-acyltransferase PlsY"/>
    <property type="match status" value="1"/>
</dbReference>
<dbReference type="PANTHER" id="PTHR30309:SF0">
    <property type="entry name" value="GLYCEROL-3-PHOSPHATE ACYLTRANSFERASE-RELATED"/>
    <property type="match status" value="1"/>
</dbReference>
<dbReference type="PANTHER" id="PTHR30309">
    <property type="entry name" value="INNER MEMBRANE PROTEIN YGIH"/>
    <property type="match status" value="1"/>
</dbReference>
<dbReference type="Pfam" id="PF02660">
    <property type="entry name" value="G3P_acyltransf"/>
    <property type="match status" value="1"/>
</dbReference>
<dbReference type="SMART" id="SM01207">
    <property type="entry name" value="G3P_acyltransf"/>
    <property type="match status" value="1"/>
</dbReference>
<protein>
    <recommendedName>
        <fullName evidence="1">Glycerol-3-phosphate acyltransferase</fullName>
    </recommendedName>
    <alternativeName>
        <fullName evidence="1">Acyl-PO4 G3P acyltransferase</fullName>
    </alternativeName>
    <alternativeName>
        <fullName evidence="1">Acyl-phosphate--glycerol-3-phosphate acyltransferase</fullName>
    </alternativeName>
    <alternativeName>
        <fullName evidence="1">G3P acyltransferase</fullName>
        <shortName evidence="1">GPAT</shortName>
        <ecNumber evidence="1">2.3.1.275</ecNumber>
    </alternativeName>
    <alternativeName>
        <fullName evidence="1">Lysophosphatidic acid synthase</fullName>
        <shortName evidence="1">LPA synthase</shortName>
    </alternativeName>
</protein>
<proteinExistence type="inferred from homology"/>
<gene>
    <name evidence="1" type="primary">plsY</name>
    <name type="ordered locus">Rpal_3529</name>
</gene>
<feature type="chain" id="PRO_1000136113" description="Glycerol-3-phosphate acyltransferase">
    <location>
        <begin position="1"/>
        <end position="203"/>
    </location>
</feature>
<feature type="transmembrane region" description="Helical" evidence="1">
    <location>
        <begin position="5"/>
        <end position="25"/>
    </location>
</feature>
<feature type="transmembrane region" description="Helical" evidence="1">
    <location>
        <begin position="55"/>
        <end position="75"/>
    </location>
</feature>
<feature type="transmembrane region" description="Helical" evidence="1">
    <location>
        <begin position="84"/>
        <end position="104"/>
    </location>
</feature>
<feature type="transmembrane region" description="Helical" evidence="1">
    <location>
        <begin position="118"/>
        <end position="138"/>
    </location>
</feature>
<feature type="transmembrane region" description="Helical" evidence="1">
    <location>
        <begin position="159"/>
        <end position="179"/>
    </location>
</feature>
<evidence type="ECO:0000255" key="1">
    <source>
        <dbReference type="HAMAP-Rule" id="MF_01043"/>
    </source>
</evidence>
<organism>
    <name type="scientific">Rhodopseudomonas palustris (strain TIE-1)</name>
    <dbReference type="NCBI Taxonomy" id="395960"/>
    <lineage>
        <taxon>Bacteria</taxon>
        <taxon>Pseudomonadati</taxon>
        <taxon>Pseudomonadota</taxon>
        <taxon>Alphaproteobacteria</taxon>
        <taxon>Hyphomicrobiales</taxon>
        <taxon>Nitrobacteraceae</taxon>
        <taxon>Rhodopseudomonas</taxon>
    </lineage>
</organism>
<comment type="function">
    <text evidence="1">Catalyzes the transfer of an acyl group from acyl-phosphate (acyl-PO(4)) to glycerol-3-phosphate (G3P) to form lysophosphatidic acid (LPA). This enzyme utilizes acyl-phosphate as fatty acyl donor, but not acyl-CoA or acyl-ACP.</text>
</comment>
<comment type="catalytic activity">
    <reaction evidence="1">
        <text>an acyl phosphate + sn-glycerol 3-phosphate = a 1-acyl-sn-glycero-3-phosphate + phosphate</text>
        <dbReference type="Rhea" id="RHEA:34075"/>
        <dbReference type="ChEBI" id="CHEBI:43474"/>
        <dbReference type="ChEBI" id="CHEBI:57597"/>
        <dbReference type="ChEBI" id="CHEBI:57970"/>
        <dbReference type="ChEBI" id="CHEBI:59918"/>
        <dbReference type="EC" id="2.3.1.275"/>
    </reaction>
</comment>
<comment type="pathway">
    <text evidence="1">Lipid metabolism; phospholipid metabolism.</text>
</comment>
<comment type="subunit">
    <text evidence="1">Probably interacts with PlsX.</text>
</comment>
<comment type="subcellular location">
    <subcellularLocation>
        <location evidence="1">Cell inner membrane</location>
        <topology evidence="1">Multi-pass membrane protein</topology>
    </subcellularLocation>
</comment>
<comment type="similarity">
    <text evidence="1">Belongs to the PlsY family.</text>
</comment>
<name>PLSY_RHOPT</name>
<reference key="1">
    <citation type="submission" date="2008-05" db="EMBL/GenBank/DDBJ databases">
        <title>Complete sequence of Rhodopseudomonas palustris TIE-1.</title>
        <authorList>
            <consortium name="US DOE Joint Genome Institute"/>
            <person name="Lucas S."/>
            <person name="Copeland A."/>
            <person name="Lapidus A."/>
            <person name="Glavina del Rio T."/>
            <person name="Dalin E."/>
            <person name="Tice H."/>
            <person name="Pitluck S."/>
            <person name="Chain P."/>
            <person name="Malfatti S."/>
            <person name="Shin M."/>
            <person name="Vergez L."/>
            <person name="Lang D."/>
            <person name="Schmutz J."/>
            <person name="Larimer F."/>
            <person name="Land M."/>
            <person name="Hauser L."/>
            <person name="Kyrpides N."/>
            <person name="Mikhailova N."/>
            <person name="Emerson D."/>
            <person name="Newman D.K."/>
            <person name="Roden E."/>
            <person name="Richardson P."/>
        </authorList>
    </citation>
    <scope>NUCLEOTIDE SEQUENCE [LARGE SCALE GENOMIC DNA]</scope>
    <source>
        <strain>TIE-1</strain>
    </source>
</reference>
<sequence>MMIGIYIAALVIGYLFGSIPFGLILTKIAGTQDLRSIGSGNIGATNVLRTGRKGLAAATLLLDALKGTAAVIVAAYLASGTDAIAANAAMLAALGAFLGHLFPVWLKFKGGKGVAVYIGVLIGLFWPAAVVFCIMWLATAFTSRYSSLSALVASFVTPIFLWWFGHDSLASLFAVLTLLLFWMHRENIKRLQAGTESKIGQKK</sequence>